<protein>
    <recommendedName>
        <fullName evidence="1">LPS-assembly lipoprotein LptM</fullName>
    </recommendedName>
</protein>
<keyword id="KW-0998">Cell outer membrane</keyword>
<keyword id="KW-0449">Lipoprotein</keyword>
<keyword id="KW-0472">Membrane</keyword>
<keyword id="KW-0564">Palmitate</keyword>
<keyword id="KW-1185">Reference proteome</keyword>
<keyword id="KW-0732">Signal</keyword>
<name>LPTM_SALTY</name>
<evidence type="ECO:0000250" key="1">
    <source>
        <dbReference type="UniProtKB" id="P0ADN6"/>
    </source>
</evidence>
<evidence type="ECO:0000255" key="2">
    <source>
        <dbReference type="PROSITE-ProRule" id="PRU00303"/>
    </source>
</evidence>
<evidence type="ECO:0000256" key="3">
    <source>
        <dbReference type="SAM" id="MobiDB-lite"/>
    </source>
</evidence>
<evidence type="ECO:0000305" key="4"/>
<comment type="function">
    <text evidence="1">Component of the lipopolysaccharide (LPS) transport (Lpt) pathway that promotes efficient assembly of the outer membrane LPS translocon (LptDE) by the BAM complex (By similarity). Facilitates oxidative maturation of LptD by stabilizing a conformation of the LPS translocon in which LptD can efficiently acquire native disulfide bonds, thereby activating the LPS translocon (By similarity).</text>
</comment>
<comment type="subunit">
    <text evidence="1">Interacts with the outer membrane embedded portion of the LPS translocon formed by LptD and LptE (LptDE).</text>
</comment>
<comment type="subcellular location">
    <subcellularLocation>
        <location evidence="1">Cell outer membrane</location>
        <topology evidence="2">Lipid-anchor</topology>
    </subcellularLocation>
</comment>
<comment type="similarity">
    <text evidence="4">Belongs to the LptM family.</text>
</comment>
<accession>P0A1T6</accession>
<accession>Q9L6P7</accession>
<organism>
    <name type="scientific">Salmonella typhimurium (strain LT2 / SGSC1412 / ATCC 700720)</name>
    <dbReference type="NCBI Taxonomy" id="99287"/>
    <lineage>
        <taxon>Bacteria</taxon>
        <taxon>Pseudomonadati</taxon>
        <taxon>Pseudomonadota</taxon>
        <taxon>Gammaproteobacteria</taxon>
        <taxon>Enterobacterales</taxon>
        <taxon>Enterobacteriaceae</taxon>
        <taxon>Salmonella</taxon>
    </lineage>
</organism>
<gene>
    <name evidence="1" type="primary">lptM</name>
    <name type="synonym">yifL</name>
    <name type="ordered locus">STM3946</name>
    <name type="ORF">STMD1.100</name>
</gene>
<proteinExistence type="inferred from homology"/>
<reference key="1">
    <citation type="journal article" date="2001" name="Nature">
        <title>Complete genome sequence of Salmonella enterica serovar Typhimurium LT2.</title>
        <authorList>
            <person name="McClelland M."/>
            <person name="Sanderson K.E."/>
            <person name="Spieth J."/>
            <person name="Clifton S.W."/>
            <person name="Latreille P."/>
            <person name="Courtney L."/>
            <person name="Porwollik S."/>
            <person name="Ali J."/>
            <person name="Dante M."/>
            <person name="Du F."/>
            <person name="Hou S."/>
            <person name="Layman D."/>
            <person name="Leonard S."/>
            <person name="Nguyen C."/>
            <person name="Scott K."/>
            <person name="Holmes A."/>
            <person name="Grewal N."/>
            <person name="Mulvaney E."/>
            <person name="Ryan E."/>
            <person name="Sun H."/>
            <person name="Florea L."/>
            <person name="Miller W."/>
            <person name="Stoneking T."/>
            <person name="Nhan M."/>
            <person name="Waterston R."/>
            <person name="Wilson R.K."/>
        </authorList>
    </citation>
    <scope>NUCLEOTIDE SEQUENCE [LARGE SCALE GENOMIC DNA]</scope>
    <source>
        <strain>LT2 / SGSC1412 / ATCC 700720</strain>
    </source>
</reference>
<dbReference type="EMBL" id="AF233324">
    <property type="protein sequence ID" value="AAF33446.1"/>
    <property type="molecule type" value="Genomic_DNA"/>
</dbReference>
<dbReference type="EMBL" id="AE006468">
    <property type="protein sequence ID" value="AAL22790.1"/>
    <property type="molecule type" value="Genomic_DNA"/>
</dbReference>
<dbReference type="RefSeq" id="NP_462831.1">
    <property type="nucleotide sequence ID" value="NC_003197.2"/>
</dbReference>
<dbReference type="RefSeq" id="WP_000799903.1">
    <property type="nucleotide sequence ID" value="NC_003197.2"/>
</dbReference>
<dbReference type="STRING" id="99287.STM3946"/>
<dbReference type="PaxDb" id="99287-STM3946"/>
<dbReference type="GeneID" id="1255472"/>
<dbReference type="KEGG" id="stm:STM3946"/>
<dbReference type="PATRIC" id="fig|99287.12.peg.4164"/>
<dbReference type="HOGENOM" id="CLU_200497_0_0_6"/>
<dbReference type="OMA" id="GFNEMKT"/>
<dbReference type="PhylomeDB" id="P0A1T6"/>
<dbReference type="BioCyc" id="SENT99287:STM3946-MONOMER"/>
<dbReference type="Proteomes" id="UP000001014">
    <property type="component" value="Chromosome"/>
</dbReference>
<dbReference type="GO" id="GO:0009279">
    <property type="term" value="C:cell outer membrane"/>
    <property type="evidence" value="ECO:0007669"/>
    <property type="project" value="UniProtKB-SubCell"/>
</dbReference>
<dbReference type="InterPro" id="IPR032831">
    <property type="entry name" value="LptM_cons"/>
</dbReference>
<dbReference type="NCBIfam" id="NF047847">
    <property type="entry name" value="SS_mature_LptM"/>
    <property type="match status" value="1"/>
</dbReference>
<dbReference type="Pfam" id="PF13627">
    <property type="entry name" value="LptM_cons"/>
    <property type="match status" value="1"/>
</dbReference>
<dbReference type="PROSITE" id="PS51257">
    <property type="entry name" value="PROKAR_LIPOPROTEIN"/>
    <property type="match status" value="1"/>
</dbReference>
<feature type="signal peptide" evidence="2">
    <location>
        <begin position="1"/>
        <end position="19"/>
    </location>
</feature>
<feature type="chain" id="PRO_0000013933" description="LPS-assembly lipoprotein LptM">
    <location>
        <begin position="20"/>
        <end position="67"/>
    </location>
</feature>
<feature type="region of interest" description="Disordered" evidence="3">
    <location>
        <begin position="26"/>
        <end position="67"/>
    </location>
</feature>
<feature type="lipid moiety-binding region" description="N-palmitoyl cysteine" evidence="2">
    <location>
        <position position="20"/>
    </location>
</feature>
<feature type="lipid moiety-binding region" description="S-diacylglycerol cysteine" evidence="2">
    <location>
        <position position="20"/>
    </location>
</feature>
<sequence length="67" mass="7212">MKNVFKTLAVLLTLFSLTGCGLKGPLYFPPADKNAPPPTKKVDSQTQSTMPDKNDRATGDGPSQVNY</sequence>